<evidence type="ECO:0000255" key="1">
    <source>
        <dbReference type="HAMAP-Rule" id="MF_00480"/>
    </source>
</evidence>
<evidence type="ECO:0000305" key="2"/>
<sequence length="195" mass="22057">MVENIEVSNLNVKVFGKWDTKVEVRDPSLKKYIDLMSIYLPHTGGRHEHRRFGKSRIPIVERLINNLMRPGRNKGKKMLAYNIVKTTFDIIAVKTGQNPIQVLVRAIENAAPREEVTRIMYGGIVYYVAVDVAPQRRVDLALRHLVTGASEASFNNPKPIEEALAEEIIAAANNDNKSVAIRKKEEIERIALSSR</sequence>
<gene>
    <name evidence="1" type="primary">rps7</name>
    <name type="ordered locus">Saci_0686</name>
</gene>
<comment type="function">
    <text evidence="1">One of the primary rRNA binding proteins, it binds directly to 16S rRNA where it nucleates assembly of the head domain of the 30S subunit. Is located at the subunit interface close to the decoding center.</text>
</comment>
<comment type="subunit">
    <text>Part of the 30S ribosomal subunit.</text>
</comment>
<comment type="similarity">
    <text evidence="1">Belongs to the universal ribosomal protein uS7 family.</text>
</comment>
<keyword id="KW-0002">3D-structure</keyword>
<keyword id="KW-1185">Reference proteome</keyword>
<keyword id="KW-0687">Ribonucleoprotein</keyword>
<keyword id="KW-0689">Ribosomal protein</keyword>
<keyword id="KW-0694">RNA-binding</keyword>
<keyword id="KW-0699">rRNA-binding</keyword>
<organism>
    <name type="scientific">Sulfolobus acidocaldarius (strain ATCC 33909 / DSM 639 / JCM 8929 / NBRC 15157 / NCIMB 11770)</name>
    <dbReference type="NCBI Taxonomy" id="330779"/>
    <lineage>
        <taxon>Archaea</taxon>
        <taxon>Thermoproteota</taxon>
        <taxon>Thermoprotei</taxon>
        <taxon>Sulfolobales</taxon>
        <taxon>Sulfolobaceae</taxon>
        <taxon>Sulfolobus</taxon>
    </lineage>
</organism>
<accession>P17198</accession>
<accession>Q4JAW3</accession>
<proteinExistence type="evidence at protein level"/>
<protein>
    <recommendedName>
        <fullName evidence="1">Small ribosomal subunit protein uS7</fullName>
    </recommendedName>
    <alternativeName>
        <fullName evidence="2">30S ribosomal protein S7</fullName>
    </alternativeName>
</protein>
<reference key="1">
    <citation type="journal article" date="1991" name="Syst. Appl. Microbiol.">
        <title>Organisation and nucleotide sequence of a gene cluster comprising the translation elongation factor 1-alpha from the extreme thermophilic archaebacterium Sulfolobus acidocaldarius: phylogenetic implications.</title>
        <authorList>
            <person name="Auer J."/>
            <person name="Spicker G."/>
            <person name="Mayerhofer L."/>
            <person name="Puehler G."/>
            <person name="Boeck A."/>
        </authorList>
    </citation>
    <scope>NUCLEOTIDE SEQUENCE [GENOMIC DNA]</scope>
    <source>
        <strain>ATCC 33909 / DSM 639 / JCM 8929 / NBRC 15157 / NCIMB 11770</strain>
    </source>
</reference>
<reference key="2">
    <citation type="journal article" date="2005" name="J. Bacteriol.">
        <title>The genome of Sulfolobus acidocaldarius, a model organism of the Crenarchaeota.</title>
        <authorList>
            <person name="Chen L."/>
            <person name="Bruegger K."/>
            <person name="Skovgaard M."/>
            <person name="Redder P."/>
            <person name="She Q."/>
            <person name="Torarinsson E."/>
            <person name="Greve B."/>
            <person name="Awayez M."/>
            <person name="Zibat A."/>
            <person name="Klenk H.-P."/>
            <person name="Garrett R.A."/>
        </authorList>
    </citation>
    <scope>NUCLEOTIDE SEQUENCE [LARGE SCALE GENOMIC DNA]</scope>
    <source>
        <strain>ATCC 33909 / DSM 639 / JCM 8929 / NBRC 15157 / NCIMB 11770</strain>
    </source>
</reference>
<feature type="chain" id="PRO_0000124412" description="Small ribosomal subunit protein uS7">
    <location>
        <begin position="1"/>
        <end position="195"/>
    </location>
</feature>
<name>RS7_SULAC</name>
<dbReference type="EMBL" id="X52382">
    <property type="protein sequence ID" value="CAA36607.1"/>
    <property type="molecule type" value="Genomic_DNA"/>
</dbReference>
<dbReference type="EMBL" id="CP000077">
    <property type="protein sequence ID" value="AAY80066.1"/>
    <property type="molecule type" value="Genomic_DNA"/>
</dbReference>
<dbReference type="PIR" id="S12817">
    <property type="entry name" value="R3UC7"/>
</dbReference>
<dbReference type="RefSeq" id="WP_011277568.1">
    <property type="nucleotide sequence ID" value="NC_007181.1"/>
</dbReference>
<dbReference type="PDB" id="8HKX">
    <property type="method" value="EM"/>
    <property type="resolution" value="3.14 A"/>
    <property type="chains" value="AS7P=3-195"/>
</dbReference>
<dbReference type="PDB" id="8HKY">
    <property type="method" value="EM"/>
    <property type="resolution" value="4.45 A"/>
    <property type="chains" value="AS7P=3-195"/>
</dbReference>
<dbReference type="PDB" id="8HKZ">
    <property type="method" value="EM"/>
    <property type="resolution" value="4.78 A"/>
    <property type="chains" value="AS7P=3-195"/>
</dbReference>
<dbReference type="PDB" id="8HL1">
    <property type="method" value="EM"/>
    <property type="resolution" value="3.93 A"/>
    <property type="chains" value="AS7P=3-195"/>
</dbReference>
<dbReference type="PDB" id="8HL2">
    <property type="method" value="EM"/>
    <property type="resolution" value="4.10 A"/>
    <property type="chains" value="AS7P=3-195"/>
</dbReference>
<dbReference type="PDB" id="8HL3">
    <property type="method" value="EM"/>
    <property type="resolution" value="4.80 A"/>
    <property type="chains" value="AS7P=3-195"/>
</dbReference>
<dbReference type="PDB" id="8HL4">
    <property type="method" value="EM"/>
    <property type="resolution" value="4.62 A"/>
    <property type="chains" value="AS7P=3-195"/>
</dbReference>
<dbReference type="PDB" id="8HL5">
    <property type="method" value="EM"/>
    <property type="resolution" value="5.72 A"/>
    <property type="chains" value="AS7P=3-195"/>
</dbReference>
<dbReference type="PDB" id="8WKP">
    <property type="method" value="EM"/>
    <property type="resolution" value="4.62 A"/>
    <property type="chains" value="AS7P=3-195"/>
</dbReference>
<dbReference type="PDB" id="8WQ2">
    <property type="method" value="EM"/>
    <property type="resolution" value="4.10 A"/>
    <property type="chains" value="AS7P=3-195"/>
</dbReference>
<dbReference type="PDB" id="8WQ4">
    <property type="method" value="EM"/>
    <property type="resolution" value="4.53 A"/>
    <property type="chains" value="AS7P=3-195"/>
</dbReference>
<dbReference type="PDBsum" id="8HKX"/>
<dbReference type="PDBsum" id="8HKY"/>
<dbReference type="PDBsum" id="8HKZ"/>
<dbReference type="PDBsum" id="8HL1"/>
<dbReference type="PDBsum" id="8HL2"/>
<dbReference type="PDBsum" id="8HL3"/>
<dbReference type="PDBsum" id="8HL4"/>
<dbReference type="PDBsum" id="8HL5"/>
<dbReference type="PDBsum" id="8WKP"/>
<dbReference type="PDBsum" id="8WQ2"/>
<dbReference type="PDBsum" id="8WQ4"/>
<dbReference type="EMDB" id="EMD-34862"/>
<dbReference type="EMDB" id="EMD-34863"/>
<dbReference type="EMDB" id="EMD-34864"/>
<dbReference type="EMDB" id="EMD-34866"/>
<dbReference type="EMDB" id="EMD-34867"/>
<dbReference type="EMDB" id="EMD-34868"/>
<dbReference type="EMDB" id="EMD-34869"/>
<dbReference type="EMDB" id="EMD-34870"/>
<dbReference type="EMDB" id="EMD-37604"/>
<dbReference type="EMDB" id="EMD-37733"/>
<dbReference type="EMDB" id="EMD-37734"/>
<dbReference type="SMR" id="P17198"/>
<dbReference type="STRING" id="330779.Saci_0686"/>
<dbReference type="GeneID" id="14551201"/>
<dbReference type="KEGG" id="sai:Saci_0686"/>
<dbReference type="PATRIC" id="fig|330779.12.peg.654"/>
<dbReference type="eggNOG" id="arCOG04254">
    <property type="taxonomic scope" value="Archaea"/>
</dbReference>
<dbReference type="HOGENOM" id="CLU_063975_0_0_2"/>
<dbReference type="Proteomes" id="UP000001018">
    <property type="component" value="Chromosome"/>
</dbReference>
<dbReference type="GO" id="GO:0015935">
    <property type="term" value="C:small ribosomal subunit"/>
    <property type="evidence" value="ECO:0007669"/>
    <property type="project" value="InterPro"/>
</dbReference>
<dbReference type="GO" id="GO:0019843">
    <property type="term" value="F:rRNA binding"/>
    <property type="evidence" value="ECO:0007669"/>
    <property type="project" value="UniProtKB-UniRule"/>
</dbReference>
<dbReference type="GO" id="GO:0003735">
    <property type="term" value="F:structural constituent of ribosome"/>
    <property type="evidence" value="ECO:0007669"/>
    <property type="project" value="InterPro"/>
</dbReference>
<dbReference type="GO" id="GO:0006412">
    <property type="term" value="P:translation"/>
    <property type="evidence" value="ECO:0007669"/>
    <property type="project" value="UniProtKB-UniRule"/>
</dbReference>
<dbReference type="CDD" id="cd14867">
    <property type="entry name" value="uS7_Eukaryote"/>
    <property type="match status" value="1"/>
</dbReference>
<dbReference type="FunFam" id="1.10.455.10:FF:000011">
    <property type="entry name" value="30S ribosomal protein S7"/>
    <property type="match status" value="1"/>
</dbReference>
<dbReference type="Gene3D" id="1.10.455.10">
    <property type="entry name" value="Ribosomal protein S7 domain"/>
    <property type="match status" value="1"/>
</dbReference>
<dbReference type="HAMAP" id="MF_00480_A">
    <property type="entry name" value="Ribosomal_uS7_A"/>
    <property type="match status" value="1"/>
</dbReference>
<dbReference type="InterPro" id="IPR000235">
    <property type="entry name" value="Ribosomal_uS7"/>
</dbReference>
<dbReference type="InterPro" id="IPR026018">
    <property type="entry name" value="Ribosomal_uS7_arc"/>
</dbReference>
<dbReference type="InterPro" id="IPR020606">
    <property type="entry name" value="Ribosomal_uS7_CS"/>
</dbReference>
<dbReference type="InterPro" id="IPR023798">
    <property type="entry name" value="Ribosomal_uS7_dom"/>
</dbReference>
<dbReference type="InterPro" id="IPR036823">
    <property type="entry name" value="Ribosomal_uS7_dom_sf"/>
</dbReference>
<dbReference type="InterPro" id="IPR005716">
    <property type="entry name" value="Ribosomal_uS7_euk/arc"/>
</dbReference>
<dbReference type="NCBIfam" id="NF003106">
    <property type="entry name" value="PRK04027.1"/>
    <property type="match status" value="1"/>
</dbReference>
<dbReference type="NCBIfam" id="TIGR01028">
    <property type="entry name" value="uS7_euk_arch"/>
    <property type="match status" value="1"/>
</dbReference>
<dbReference type="PANTHER" id="PTHR11205">
    <property type="entry name" value="RIBOSOMAL PROTEIN S7"/>
    <property type="match status" value="1"/>
</dbReference>
<dbReference type="Pfam" id="PF00177">
    <property type="entry name" value="Ribosomal_S7"/>
    <property type="match status" value="1"/>
</dbReference>
<dbReference type="PIRSF" id="PIRSF002122">
    <property type="entry name" value="RPS7p_RPS7a_RPS5e_RPS7o"/>
    <property type="match status" value="1"/>
</dbReference>
<dbReference type="SUPFAM" id="SSF47973">
    <property type="entry name" value="Ribosomal protein S7"/>
    <property type="match status" value="1"/>
</dbReference>
<dbReference type="PROSITE" id="PS00052">
    <property type="entry name" value="RIBOSOMAL_S7"/>
    <property type="match status" value="1"/>
</dbReference>